<organism>
    <name type="scientific">Francisella tularensis subsp. mediasiatica (strain FSC147)</name>
    <dbReference type="NCBI Taxonomy" id="441952"/>
    <lineage>
        <taxon>Bacteria</taxon>
        <taxon>Pseudomonadati</taxon>
        <taxon>Pseudomonadota</taxon>
        <taxon>Gammaproteobacteria</taxon>
        <taxon>Thiotrichales</taxon>
        <taxon>Francisellaceae</taxon>
        <taxon>Francisella</taxon>
    </lineage>
</organism>
<sequence length="44" mass="5180">MKRTFQPSNLKRKRTHGFRARMKTLSGRKVIRNRRAKGRAKLAA</sequence>
<protein>
    <recommendedName>
        <fullName evidence="1">Large ribosomal subunit protein bL34</fullName>
    </recommendedName>
    <alternativeName>
        <fullName evidence="2">50S ribosomal protein L34</fullName>
    </alternativeName>
</protein>
<proteinExistence type="inferred from homology"/>
<name>RL34_FRATM</name>
<comment type="similarity">
    <text evidence="1">Belongs to the bacterial ribosomal protein bL34 family.</text>
</comment>
<reference key="1">
    <citation type="journal article" date="2009" name="PLoS Pathog.">
        <title>Molecular evolutionary consequences of niche restriction in Francisella tularensis, a facultative intracellular pathogen.</title>
        <authorList>
            <person name="Larsson P."/>
            <person name="Elfsmark D."/>
            <person name="Svensson K."/>
            <person name="Wikstroem P."/>
            <person name="Forsman M."/>
            <person name="Brettin T."/>
            <person name="Keim P."/>
            <person name="Johansson A."/>
        </authorList>
    </citation>
    <scope>NUCLEOTIDE SEQUENCE [LARGE SCALE GENOMIC DNA]</scope>
    <source>
        <strain>FSC147</strain>
    </source>
</reference>
<evidence type="ECO:0000255" key="1">
    <source>
        <dbReference type="HAMAP-Rule" id="MF_00391"/>
    </source>
</evidence>
<evidence type="ECO:0000305" key="2"/>
<dbReference type="EMBL" id="CP000915">
    <property type="protein sequence ID" value="ACD31421.1"/>
    <property type="molecule type" value="Genomic_DNA"/>
</dbReference>
<dbReference type="SMR" id="B2SE57"/>
<dbReference type="KEGG" id="ftm:FTM_1613"/>
<dbReference type="HOGENOM" id="CLU_129938_2_0_6"/>
<dbReference type="GO" id="GO:1990904">
    <property type="term" value="C:ribonucleoprotein complex"/>
    <property type="evidence" value="ECO:0007669"/>
    <property type="project" value="UniProtKB-KW"/>
</dbReference>
<dbReference type="GO" id="GO:0005840">
    <property type="term" value="C:ribosome"/>
    <property type="evidence" value="ECO:0007669"/>
    <property type="project" value="UniProtKB-KW"/>
</dbReference>
<dbReference type="GO" id="GO:0003735">
    <property type="term" value="F:structural constituent of ribosome"/>
    <property type="evidence" value="ECO:0007669"/>
    <property type="project" value="InterPro"/>
</dbReference>
<dbReference type="GO" id="GO:0006412">
    <property type="term" value="P:translation"/>
    <property type="evidence" value="ECO:0007669"/>
    <property type="project" value="UniProtKB-UniRule"/>
</dbReference>
<dbReference type="FunFam" id="1.10.287.3980:FF:000001">
    <property type="entry name" value="Mitochondrial ribosomal protein L34"/>
    <property type="match status" value="1"/>
</dbReference>
<dbReference type="Gene3D" id="1.10.287.3980">
    <property type="match status" value="1"/>
</dbReference>
<dbReference type="HAMAP" id="MF_00391">
    <property type="entry name" value="Ribosomal_bL34"/>
    <property type="match status" value="1"/>
</dbReference>
<dbReference type="InterPro" id="IPR000271">
    <property type="entry name" value="Ribosomal_bL34"/>
</dbReference>
<dbReference type="InterPro" id="IPR020939">
    <property type="entry name" value="Ribosomal_bL34_CS"/>
</dbReference>
<dbReference type="NCBIfam" id="TIGR01030">
    <property type="entry name" value="rpmH_bact"/>
    <property type="match status" value="1"/>
</dbReference>
<dbReference type="PANTHER" id="PTHR14503:SF4">
    <property type="entry name" value="LARGE RIBOSOMAL SUBUNIT PROTEIN BL34M"/>
    <property type="match status" value="1"/>
</dbReference>
<dbReference type="PANTHER" id="PTHR14503">
    <property type="entry name" value="MITOCHONDRIAL RIBOSOMAL PROTEIN 34 FAMILY MEMBER"/>
    <property type="match status" value="1"/>
</dbReference>
<dbReference type="Pfam" id="PF00468">
    <property type="entry name" value="Ribosomal_L34"/>
    <property type="match status" value="1"/>
</dbReference>
<dbReference type="PROSITE" id="PS00784">
    <property type="entry name" value="RIBOSOMAL_L34"/>
    <property type="match status" value="1"/>
</dbReference>
<feature type="chain" id="PRO_1000196052" description="Large ribosomal subunit protein bL34">
    <location>
        <begin position="1"/>
        <end position="44"/>
    </location>
</feature>
<accession>B2SE57</accession>
<keyword id="KW-0687">Ribonucleoprotein</keyword>
<keyword id="KW-0689">Ribosomal protein</keyword>
<gene>
    <name evidence="1" type="primary">rpmH</name>
    <name type="ordered locus">FTM_1613</name>
</gene>